<keyword id="KW-0963">Cytoplasm</keyword>
<keyword id="KW-0489">Methyltransferase</keyword>
<keyword id="KW-0545">Nucleotide biosynthesis</keyword>
<keyword id="KW-1185">Reference proteome</keyword>
<keyword id="KW-0808">Transferase</keyword>
<organism>
    <name type="scientific">Corynebacterium diphtheriae (strain ATCC 700971 / NCTC 13129 / Biotype gravis)</name>
    <dbReference type="NCBI Taxonomy" id="257309"/>
    <lineage>
        <taxon>Bacteria</taxon>
        <taxon>Bacillati</taxon>
        <taxon>Actinomycetota</taxon>
        <taxon>Actinomycetes</taxon>
        <taxon>Mycobacteriales</taxon>
        <taxon>Corynebacteriaceae</taxon>
        <taxon>Corynebacterium</taxon>
    </lineage>
</organism>
<protein>
    <recommendedName>
        <fullName evidence="1">Thymidylate synthase</fullName>
        <shortName evidence="1">TS</shortName>
        <shortName evidence="1">TSase</shortName>
        <ecNumber evidence="1">2.1.1.45</ecNumber>
    </recommendedName>
</protein>
<sequence>MSTNNTIKTPYEDLLRTILEQGSHKDDRTGTGTTSLFGQQMRFDLTEAFPLITTKKVYWKGVIGELLWFLQGSSNVRWLQKRNIHIWDEWASEEGELGPVYGVQWRSWPTPDGQHVDQIAQALDILKNNPDSRRNIVSAWNVADLNNMALPPCHLLFQLYVADGKLSCQLYQRSADMFLGVPFNIASYSALTHMLAQQAGLKVGEFIWTGGDCHIYDNHREQVLTQLSREPRPYPQLTLRKASSIFDYDFDDFTIEGYDPHPAIRGEVAV</sequence>
<evidence type="ECO:0000255" key="1">
    <source>
        <dbReference type="HAMAP-Rule" id="MF_00008"/>
    </source>
</evidence>
<feature type="chain" id="PRO_0000140950" description="Thymidylate synthase">
    <location>
        <begin position="1"/>
        <end position="270"/>
    </location>
</feature>
<feature type="active site" description="Nucleophile" evidence="1">
    <location>
        <position position="153"/>
    </location>
</feature>
<feature type="binding site" description="in other chain" evidence="1">
    <location>
        <position position="28"/>
    </location>
    <ligand>
        <name>dUMP</name>
        <dbReference type="ChEBI" id="CHEBI:246422"/>
        <note>ligand shared between dimeric partners</note>
    </ligand>
</feature>
<feature type="binding site" evidence="1">
    <location>
        <begin position="133"/>
        <end position="134"/>
    </location>
    <ligand>
        <name>dUMP</name>
        <dbReference type="ChEBI" id="CHEBI:246422"/>
        <note>ligand shared between dimeric partners</note>
    </ligand>
</feature>
<feature type="binding site" description="in other chain" evidence="1">
    <location>
        <begin position="173"/>
        <end position="176"/>
    </location>
    <ligand>
        <name>dUMP</name>
        <dbReference type="ChEBI" id="CHEBI:246422"/>
        <note>ligand shared between dimeric partners</note>
    </ligand>
</feature>
<feature type="binding site" evidence="1">
    <location>
        <position position="176"/>
    </location>
    <ligand>
        <name>(6R)-5,10-methylene-5,6,7,8-tetrahydrofolate</name>
        <dbReference type="ChEBI" id="CHEBI:15636"/>
    </ligand>
</feature>
<feature type="binding site" description="in other chain" evidence="1">
    <location>
        <position position="184"/>
    </location>
    <ligand>
        <name>dUMP</name>
        <dbReference type="ChEBI" id="CHEBI:246422"/>
        <note>ligand shared between dimeric partners</note>
    </ligand>
</feature>
<feature type="binding site" description="in other chain" evidence="1">
    <location>
        <begin position="214"/>
        <end position="216"/>
    </location>
    <ligand>
        <name>dUMP</name>
        <dbReference type="ChEBI" id="CHEBI:246422"/>
        <note>ligand shared between dimeric partners</note>
    </ligand>
</feature>
<feature type="binding site" evidence="1">
    <location>
        <position position="269"/>
    </location>
    <ligand>
        <name>(6R)-5,10-methylene-5,6,7,8-tetrahydrofolate</name>
        <dbReference type="ChEBI" id="CHEBI:15636"/>
    </ligand>
</feature>
<name>TYSY_CORDI</name>
<reference key="1">
    <citation type="journal article" date="2003" name="Nucleic Acids Res.">
        <title>The complete genome sequence and analysis of Corynebacterium diphtheriae NCTC13129.</title>
        <authorList>
            <person name="Cerdeno-Tarraga A.-M."/>
            <person name="Efstratiou A."/>
            <person name="Dover L.G."/>
            <person name="Holden M.T.G."/>
            <person name="Pallen M.J."/>
            <person name="Bentley S.D."/>
            <person name="Besra G.S."/>
            <person name="Churcher C.M."/>
            <person name="James K.D."/>
            <person name="De Zoysa A."/>
            <person name="Chillingworth T."/>
            <person name="Cronin A."/>
            <person name="Dowd L."/>
            <person name="Feltwell T."/>
            <person name="Hamlin N."/>
            <person name="Holroyd S."/>
            <person name="Jagels K."/>
            <person name="Moule S."/>
            <person name="Quail M.A."/>
            <person name="Rabbinowitsch E."/>
            <person name="Rutherford K.M."/>
            <person name="Thomson N.R."/>
            <person name="Unwin L."/>
            <person name="Whitehead S."/>
            <person name="Barrell B.G."/>
            <person name="Parkhill J."/>
        </authorList>
    </citation>
    <scope>NUCLEOTIDE SEQUENCE [LARGE SCALE GENOMIC DNA]</scope>
    <source>
        <strain>ATCC 700971 / NCTC 13129 / Biotype gravis</strain>
    </source>
</reference>
<proteinExistence type="inferred from homology"/>
<comment type="function">
    <text evidence="1">Catalyzes the reductive methylation of 2'-deoxyuridine-5'-monophosphate (dUMP) to 2'-deoxythymidine-5'-monophosphate (dTMP) while utilizing 5,10-methylenetetrahydrofolate (mTHF) as the methyl donor and reductant in the reaction, yielding dihydrofolate (DHF) as a by-product. This enzymatic reaction provides an intracellular de novo source of dTMP, an essential precursor for DNA biosynthesis.</text>
</comment>
<comment type="catalytic activity">
    <reaction evidence="1">
        <text>dUMP + (6R)-5,10-methylene-5,6,7,8-tetrahydrofolate = 7,8-dihydrofolate + dTMP</text>
        <dbReference type="Rhea" id="RHEA:12104"/>
        <dbReference type="ChEBI" id="CHEBI:15636"/>
        <dbReference type="ChEBI" id="CHEBI:57451"/>
        <dbReference type="ChEBI" id="CHEBI:63528"/>
        <dbReference type="ChEBI" id="CHEBI:246422"/>
        <dbReference type="EC" id="2.1.1.45"/>
    </reaction>
</comment>
<comment type="pathway">
    <text evidence="1">Pyrimidine metabolism; dTTP biosynthesis.</text>
</comment>
<comment type="subunit">
    <text evidence="1">Homodimer.</text>
</comment>
<comment type="subcellular location">
    <subcellularLocation>
        <location evidence="1">Cytoplasm</location>
    </subcellularLocation>
</comment>
<comment type="similarity">
    <text evidence="1">Belongs to the thymidylate synthase family. Bacterial-type ThyA subfamily.</text>
</comment>
<accession>Q6NIF2</accession>
<gene>
    <name evidence="1" type="primary">thyA</name>
    <name type="ordered locus">DIP0825</name>
</gene>
<dbReference type="EC" id="2.1.1.45" evidence="1"/>
<dbReference type="EMBL" id="BX248356">
    <property type="protein sequence ID" value="CAE49341.1"/>
    <property type="molecule type" value="Genomic_DNA"/>
</dbReference>
<dbReference type="RefSeq" id="WP_010934591.1">
    <property type="nucleotide sequence ID" value="NC_002935.2"/>
</dbReference>
<dbReference type="SMR" id="Q6NIF2"/>
<dbReference type="STRING" id="257309.DIP0825"/>
<dbReference type="KEGG" id="cdi:DIP0825"/>
<dbReference type="HOGENOM" id="CLU_021669_0_0_11"/>
<dbReference type="UniPathway" id="UPA00575"/>
<dbReference type="Proteomes" id="UP000002198">
    <property type="component" value="Chromosome"/>
</dbReference>
<dbReference type="GO" id="GO:0005829">
    <property type="term" value="C:cytosol"/>
    <property type="evidence" value="ECO:0007669"/>
    <property type="project" value="TreeGrafter"/>
</dbReference>
<dbReference type="GO" id="GO:0004799">
    <property type="term" value="F:thymidylate synthase activity"/>
    <property type="evidence" value="ECO:0007669"/>
    <property type="project" value="UniProtKB-UniRule"/>
</dbReference>
<dbReference type="GO" id="GO:0006231">
    <property type="term" value="P:dTMP biosynthetic process"/>
    <property type="evidence" value="ECO:0007669"/>
    <property type="project" value="UniProtKB-UniRule"/>
</dbReference>
<dbReference type="GO" id="GO:0006235">
    <property type="term" value="P:dTTP biosynthetic process"/>
    <property type="evidence" value="ECO:0007669"/>
    <property type="project" value="UniProtKB-UniRule"/>
</dbReference>
<dbReference type="GO" id="GO:0032259">
    <property type="term" value="P:methylation"/>
    <property type="evidence" value="ECO:0007669"/>
    <property type="project" value="UniProtKB-KW"/>
</dbReference>
<dbReference type="CDD" id="cd00351">
    <property type="entry name" value="TS_Pyrimidine_HMase"/>
    <property type="match status" value="1"/>
</dbReference>
<dbReference type="FunFam" id="3.30.572.10:FF:000013">
    <property type="entry name" value="Thymidylate synthase"/>
    <property type="match status" value="1"/>
</dbReference>
<dbReference type="Gene3D" id="3.30.572.10">
    <property type="entry name" value="Thymidylate synthase/dCMP hydroxymethylase domain"/>
    <property type="match status" value="1"/>
</dbReference>
<dbReference type="HAMAP" id="MF_00008">
    <property type="entry name" value="Thymidy_synth_bact"/>
    <property type="match status" value="1"/>
</dbReference>
<dbReference type="InterPro" id="IPR045097">
    <property type="entry name" value="Thymidate_synth/dCMP_Mease"/>
</dbReference>
<dbReference type="InterPro" id="IPR023451">
    <property type="entry name" value="Thymidate_synth/dCMP_Mease_dom"/>
</dbReference>
<dbReference type="InterPro" id="IPR036926">
    <property type="entry name" value="Thymidate_synth/dCMP_Mease_sf"/>
</dbReference>
<dbReference type="InterPro" id="IPR000398">
    <property type="entry name" value="Thymidylate_synthase"/>
</dbReference>
<dbReference type="InterPro" id="IPR020940">
    <property type="entry name" value="Thymidylate_synthase_AS"/>
</dbReference>
<dbReference type="NCBIfam" id="NF002497">
    <property type="entry name" value="PRK01827.1-3"/>
    <property type="match status" value="1"/>
</dbReference>
<dbReference type="NCBIfam" id="NF002499">
    <property type="entry name" value="PRK01827.1-5"/>
    <property type="match status" value="1"/>
</dbReference>
<dbReference type="NCBIfam" id="TIGR03284">
    <property type="entry name" value="thym_sym"/>
    <property type="match status" value="2"/>
</dbReference>
<dbReference type="PANTHER" id="PTHR11548:SF9">
    <property type="entry name" value="THYMIDYLATE SYNTHASE"/>
    <property type="match status" value="1"/>
</dbReference>
<dbReference type="PANTHER" id="PTHR11548">
    <property type="entry name" value="THYMIDYLATE SYNTHASE 1"/>
    <property type="match status" value="1"/>
</dbReference>
<dbReference type="Pfam" id="PF00303">
    <property type="entry name" value="Thymidylat_synt"/>
    <property type="match status" value="1"/>
</dbReference>
<dbReference type="PRINTS" id="PR00108">
    <property type="entry name" value="THYMDSNTHASE"/>
</dbReference>
<dbReference type="SUPFAM" id="SSF55831">
    <property type="entry name" value="Thymidylate synthase/dCMP hydroxymethylase"/>
    <property type="match status" value="1"/>
</dbReference>
<dbReference type="PROSITE" id="PS00091">
    <property type="entry name" value="THYMIDYLATE_SYNTHASE"/>
    <property type="match status" value="1"/>
</dbReference>